<feature type="chain" id="PRO_1000050542" description="Ketol-acid reductoisomerase (NADP(+))">
    <location>
        <begin position="1"/>
        <end position="337"/>
    </location>
</feature>
<feature type="domain" description="KARI N-terminal Rossmann" evidence="2">
    <location>
        <begin position="3"/>
        <end position="183"/>
    </location>
</feature>
<feature type="domain" description="KARI C-terminal knotted" evidence="3">
    <location>
        <begin position="184"/>
        <end position="329"/>
    </location>
</feature>
<feature type="active site" evidence="1">
    <location>
        <position position="109"/>
    </location>
</feature>
<feature type="binding site" evidence="1">
    <location>
        <begin position="26"/>
        <end position="29"/>
    </location>
    <ligand>
        <name>NADP(+)</name>
        <dbReference type="ChEBI" id="CHEBI:58349"/>
    </ligand>
</feature>
<feature type="binding site" evidence="1">
    <location>
        <position position="49"/>
    </location>
    <ligand>
        <name>NADP(+)</name>
        <dbReference type="ChEBI" id="CHEBI:58349"/>
    </ligand>
</feature>
<feature type="binding site" evidence="1">
    <location>
        <position position="52"/>
    </location>
    <ligand>
        <name>NADP(+)</name>
        <dbReference type="ChEBI" id="CHEBI:58349"/>
    </ligand>
</feature>
<feature type="binding site" evidence="1">
    <location>
        <position position="54"/>
    </location>
    <ligand>
        <name>NADP(+)</name>
        <dbReference type="ChEBI" id="CHEBI:58349"/>
    </ligand>
</feature>
<feature type="binding site" evidence="1">
    <location>
        <begin position="84"/>
        <end position="87"/>
    </location>
    <ligand>
        <name>NADP(+)</name>
        <dbReference type="ChEBI" id="CHEBI:58349"/>
    </ligand>
</feature>
<feature type="binding site" evidence="1">
    <location>
        <position position="135"/>
    </location>
    <ligand>
        <name>NADP(+)</name>
        <dbReference type="ChEBI" id="CHEBI:58349"/>
    </ligand>
</feature>
<feature type="binding site" evidence="1">
    <location>
        <position position="192"/>
    </location>
    <ligand>
        <name>Mg(2+)</name>
        <dbReference type="ChEBI" id="CHEBI:18420"/>
        <label>1</label>
    </ligand>
</feature>
<feature type="binding site" evidence="1">
    <location>
        <position position="192"/>
    </location>
    <ligand>
        <name>Mg(2+)</name>
        <dbReference type="ChEBI" id="CHEBI:18420"/>
        <label>2</label>
    </ligand>
</feature>
<feature type="binding site" evidence="1">
    <location>
        <position position="196"/>
    </location>
    <ligand>
        <name>Mg(2+)</name>
        <dbReference type="ChEBI" id="CHEBI:18420"/>
        <label>1</label>
    </ligand>
</feature>
<feature type="binding site" evidence="1">
    <location>
        <position position="228"/>
    </location>
    <ligand>
        <name>Mg(2+)</name>
        <dbReference type="ChEBI" id="CHEBI:18420"/>
        <label>2</label>
    </ligand>
</feature>
<feature type="binding site" evidence="1">
    <location>
        <position position="232"/>
    </location>
    <ligand>
        <name>Mg(2+)</name>
        <dbReference type="ChEBI" id="CHEBI:18420"/>
        <label>2</label>
    </ligand>
</feature>
<feature type="binding site" evidence="1">
    <location>
        <position position="253"/>
    </location>
    <ligand>
        <name>substrate</name>
    </ligand>
</feature>
<evidence type="ECO:0000255" key="1">
    <source>
        <dbReference type="HAMAP-Rule" id="MF_00435"/>
    </source>
</evidence>
<evidence type="ECO:0000255" key="2">
    <source>
        <dbReference type="PROSITE-ProRule" id="PRU01197"/>
    </source>
</evidence>
<evidence type="ECO:0000255" key="3">
    <source>
        <dbReference type="PROSITE-ProRule" id="PRU01198"/>
    </source>
</evidence>
<comment type="function">
    <text evidence="1">Involved in the biosynthesis of branched-chain amino acids (BCAA). Catalyzes an alkyl-migration followed by a ketol-acid reduction of (S)-2-acetolactate (S2AL) to yield (R)-2,3-dihydroxy-isovalerate. In the isomerase reaction, S2AL is rearranged via a Mg-dependent methyl migration to produce 3-hydroxy-3-methyl-2-ketobutyrate (HMKB). In the reductase reaction, this 2-ketoacid undergoes a metal-dependent reduction by NADPH to yield (R)-2,3-dihydroxy-isovalerate.</text>
</comment>
<comment type="catalytic activity">
    <reaction evidence="1">
        <text>(2R)-2,3-dihydroxy-3-methylbutanoate + NADP(+) = (2S)-2-acetolactate + NADPH + H(+)</text>
        <dbReference type="Rhea" id="RHEA:22068"/>
        <dbReference type="ChEBI" id="CHEBI:15378"/>
        <dbReference type="ChEBI" id="CHEBI:49072"/>
        <dbReference type="ChEBI" id="CHEBI:57783"/>
        <dbReference type="ChEBI" id="CHEBI:58349"/>
        <dbReference type="ChEBI" id="CHEBI:58476"/>
        <dbReference type="EC" id="1.1.1.86"/>
    </reaction>
</comment>
<comment type="catalytic activity">
    <reaction evidence="1">
        <text>(2R,3R)-2,3-dihydroxy-3-methylpentanoate + NADP(+) = (S)-2-ethyl-2-hydroxy-3-oxobutanoate + NADPH + H(+)</text>
        <dbReference type="Rhea" id="RHEA:13493"/>
        <dbReference type="ChEBI" id="CHEBI:15378"/>
        <dbReference type="ChEBI" id="CHEBI:49256"/>
        <dbReference type="ChEBI" id="CHEBI:49258"/>
        <dbReference type="ChEBI" id="CHEBI:57783"/>
        <dbReference type="ChEBI" id="CHEBI:58349"/>
        <dbReference type="EC" id="1.1.1.86"/>
    </reaction>
</comment>
<comment type="cofactor">
    <cofactor evidence="1">
        <name>Mg(2+)</name>
        <dbReference type="ChEBI" id="CHEBI:18420"/>
    </cofactor>
    <text evidence="1">Binds 2 magnesium ions per subunit.</text>
</comment>
<comment type="pathway">
    <text evidence="1">Amino-acid biosynthesis; L-isoleucine biosynthesis; L-isoleucine from 2-oxobutanoate: step 2/4.</text>
</comment>
<comment type="pathway">
    <text evidence="1">Amino-acid biosynthesis; L-valine biosynthesis; L-valine from pyruvate: step 2/4.</text>
</comment>
<comment type="similarity">
    <text evidence="1">Belongs to the ketol-acid reductoisomerase family.</text>
</comment>
<name>ILVC_MYCSS</name>
<keyword id="KW-0028">Amino-acid biosynthesis</keyword>
<keyword id="KW-0100">Branched-chain amino acid biosynthesis</keyword>
<keyword id="KW-0460">Magnesium</keyword>
<keyword id="KW-0479">Metal-binding</keyword>
<keyword id="KW-0521">NADP</keyword>
<keyword id="KW-0560">Oxidoreductase</keyword>
<accession>Q1BAR7</accession>
<protein>
    <recommendedName>
        <fullName evidence="1">Ketol-acid reductoisomerase (NADP(+))</fullName>
        <shortName evidence="1">KARI</shortName>
        <ecNumber evidence="1">1.1.1.86</ecNumber>
    </recommendedName>
    <alternativeName>
        <fullName evidence="1">Acetohydroxy-acid isomeroreductase</fullName>
        <shortName evidence="1">AHIR</shortName>
    </alternativeName>
    <alternativeName>
        <fullName evidence="1">Alpha-keto-beta-hydroxylacyl reductoisomerase</fullName>
    </alternativeName>
    <alternativeName>
        <fullName evidence="1">Ketol-acid reductoisomerase type 1</fullName>
    </alternativeName>
    <alternativeName>
        <fullName evidence="1">Ketol-acid reductoisomerase type I</fullName>
    </alternativeName>
</protein>
<sequence>MAVEMFYDDDADLSIIQGRKVAVIGYGSQGHAHSLSLRDSGVQVKVGLKEGSKSREKVTEQGLEVDTPAEVAKWADVIMLLAPDTAQAEIFTNDIEPNLEDGNALFFGHGLNIHFGLIKPPANVTVGMVAPKGPGHLVRRQFVDGKGVPCLIAIDQDPKGEGQALALSYAAAIGGARAGVIKTTFKEETETDLFGEQAVLCGGTEELVKTGFEVMVEAGYAPEMAYFEVLHELKLIVDLMYEGGIARMNYSVSDTAEFGGYLSGPRVIDADTKERMRAILKDIQDGTFVKRLVANVEGGNKELEDLRKKNAEHPIEVTGKKLRDLMSWVDRPITETA</sequence>
<reference key="1">
    <citation type="submission" date="2006-06" db="EMBL/GenBank/DDBJ databases">
        <title>Complete sequence of chromosome of Mycobacterium sp. MCS.</title>
        <authorList>
            <consortium name="US DOE Joint Genome Institute"/>
            <person name="Copeland A."/>
            <person name="Lucas S."/>
            <person name="Lapidus A."/>
            <person name="Barry K."/>
            <person name="Detter J.C."/>
            <person name="Glavina del Rio T."/>
            <person name="Hammon N."/>
            <person name="Israni S."/>
            <person name="Dalin E."/>
            <person name="Tice H."/>
            <person name="Pitluck S."/>
            <person name="Martinez M."/>
            <person name="Schmutz J."/>
            <person name="Larimer F."/>
            <person name="Land M."/>
            <person name="Hauser L."/>
            <person name="Kyrpides N."/>
            <person name="Kim E."/>
            <person name="Miller C.D."/>
            <person name="Hughes J.E."/>
            <person name="Anderson A.J."/>
            <person name="Sims R.C."/>
            <person name="Richardson P."/>
        </authorList>
    </citation>
    <scope>NUCLEOTIDE SEQUENCE [LARGE SCALE GENOMIC DNA]</scope>
    <source>
        <strain>MCS</strain>
    </source>
</reference>
<proteinExistence type="inferred from homology"/>
<gene>
    <name evidence="1" type="primary">ilvC</name>
    <name type="ordered locus">Mmcs_1908</name>
</gene>
<organism>
    <name type="scientific">Mycobacterium sp. (strain MCS)</name>
    <dbReference type="NCBI Taxonomy" id="164756"/>
    <lineage>
        <taxon>Bacteria</taxon>
        <taxon>Bacillati</taxon>
        <taxon>Actinomycetota</taxon>
        <taxon>Actinomycetes</taxon>
        <taxon>Mycobacteriales</taxon>
        <taxon>Mycobacteriaceae</taxon>
        <taxon>Mycobacterium</taxon>
    </lineage>
</organism>
<dbReference type="EC" id="1.1.1.86" evidence="1"/>
<dbReference type="EMBL" id="CP000384">
    <property type="protein sequence ID" value="ABG08017.1"/>
    <property type="molecule type" value="Genomic_DNA"/>
</dbReference>
<dbReference type="SMR" id="Q1BAR7"/>
<dbReference type="KEGG" id="mmc:Mmcs_1908"/>
<dbReference type="HOGENOM" id="CLU_033821_0_1_11"/>
<dbReference type="BioCyc" id="MSP164756:G1G6O-1950-MONOMER"/>
<dbReference type="UniPathway" id="UPA00047">
    <property type="reaction ID" value="UER00056"/>
</dbReference>
<dbReference type="UniPathway" id="UPA00049">
    <property type="reaction ID" value="UER00060"/>
</dbReference>
<dbReference type="GO" id="GO:0005829">
    <property type="term" value="C:cytosol"/>
    <property type="evidence" value="ECO:0007669"/>
    <property type="project" value="TreeGrafter"/>
</dbReference>
<dbReference type="GO" id="GO:0004455">
    <property type="term" value="F:ketol-acid reductoisomerase activity"/>
    <property type="evidence" value="ECO:0007669"/>
    <property type="project" value="UniProtKB-UniRule"/>
</dbReference>
<dbReference type="GO" id="GO:0000287">
    <property type="term" value="F:magnesium ion binding"/>
    <property type="evidence" value="ECO:0007669"/>
    <property type="project" value="UniProtKB-UniRule"/>
</dbReference>
<dbReference type="GO" id="GO:0050661">
    <property type="term" value="F:NADP binding"/>
    <property type="evidence" value="ECO:0007669"/>
    <property type="project" value="InterPro"/>
</dbReference>
<dbReference type="GO" id="GO:0009097">
    <property type="term" value="P:isoleucine biosynthetic process"/>
    <property type="evidence" value="ECO:0007669"/>
    <property type="project" value="UniProtKB-UniRule"/>
</dbReference>
<dbReference type="GO" id="GO:0009099">
    <property type="term" value="P:L-valine biosynthetic process"/>
    <property type="evidence" value="ECO:0007669"/>
    <property type="project" value="UniProtKB-UniRule"/>
</dbReference>
<dbReference type="FunFam" id="3.40.50.720:FF:000023">
    <property type="entry name" value="Ketol-acid reductoisomerase (NADP(+))"/>
    <property type="match status" value="1"/>
</dbReference>
<dbReference type="Gene3D" id="6.10.240.10">
    <property type="match status" value="1"/>
</dbReference>
<dbReference type="Gene3D" id="3.40.50.720">
    <property type="entry name" value="NAD(P)-binding Rossmann-like Domain"/>
    <property type="match status" value="1"/>
</dbReference>
<dbReference type="HAMAP" id="MF_00435">
    <property type="entry name" value="IlvC"/>
    <property type="match status" value="1"/>
</dbReference>
<dbReference type="InterPro" id="IPR008927">
    <property type="entry name" value="6-PGluconate_DH-like_C_sf"/>
</dbReference>
<dbReference type="InterPro" id="IPR013023">
    <property type="entry name" value="KARI"/>
</dbReference>
<dbReference type="InterPro" id="IPR000506">
    <property type="entry name" value="KARI_C"/>
</dbReference>
<dbReference type="InterPro" id="IPR013116">
    <property type="entry name" value="KARI_N"/>
</dbReference>
<dbReference type="InterPro" id="IPR014359">
    <property type="entry name" value="KARI_prok"/>
</dbReference>
<dbReference type="InterPro" id="IPR036291">
    <property type="entry name" value="NAD(P)-bd_dom_sf"/>
</dbReference>
<dbReference type="NCBIfam" id="TIGR00465">
    <property type="entry name" value="ilvC"/>
    <property type="match status" value="1"/>
</dbReference>
<dbReference type="NCBIfam" id="NF004017">
    <property type="entry name" value="PRK05479.1"/>
    <property type="match status" value="1"/>
</dbReference>
<dbReference type="PANTHER" id="PTHR21371">
    <property type="entry name" value="KETOL-ACID REDUCTOISOMERASE, MITOCHONDRIAL"/>
    <property type="match status" value="1"/>
</dbReference>
<dbReference type="PANTHER" id="PTHR21371:SF1">
    <property type="entry name" value="KETOL-ACID REDUCTOISOMERASE, MITOCHONDRIAL"/>
    <property type="match status" value="1"/>
</dbReference>
<dbReference type="Pfam" id="PF01450">
    <property type="entry name" value="KARI_C"/>
    <property type="match status" value="1"/>
</dbReference>
<dbReference type="Pfam" id="PF07991">
    <property type="entry name" value="KARI_N"/>
    <property type="match status" value="1"/>
</dbReference>
<dbReference type="PIRSF" id="PIRSF000116">
    <property type="entry name" value="IlvC_gammaproteo"/>
    <property type="match status" value="1"/>
</dbReference>
<dbReference type="SUPFAM" id="SSF48179">
    <property type="entry name" value="6-phosphogluconate dehydrogenase C-terminal domain-like"/>
    <property type="match status" value="1"/>
</dbReference>
<dbReference type="SUPFAM" id="SSF51735">
    <property type="entry name" value="NAD(P)-binding Rossmann-fold domains"/>
    <property type="match status" value="1"/>
</dbReference>
<dbReference type="PROSITE" id="PS51851">
    <property type="entry name" value="KARI_C"/>
    <property type="match status" value="1"/>
</dbReference>
<dbReference type="PROSITE" id="PS51850">
    <property type="entry name" value="KARI_N"/>
    <property type="match status" value="1"/>
</dbReference>